<comment type="subcellular location">
    <subcellularLocation>
        <location evidence="1">Secreted</location>
    </subcellularLocation>
</comment>
<comment type="tissue specificity">
    <text>Expressed by the venom gland.</text>
</comment>
<comment type="PTM">
    <text evidence="3">Contains 5 disulfide bonds.</text>
</comment>
<comment type="similarity">
    <text>Belongs to the venom protein 11 family. 02 (wap-2) subfamily.</text>
</comment>
<name>TXAG7_AGEOR</name>
<proteinExistence type="evidence at transcript level"/>
<evidence type="ECO:0000250" key="1"/>
<evidence type="ECO:0000255" key="2"/>
<evidence type="ECO:0000305" key="3"/>
<organism>
    <name type="scientific">Agelena orientalis</name>
    <name type="common">Funnel-web spider</name>
    <dbReference type="NCBI Taxonomy" id="293813"/>
    <lineage>
        <taxon>Eukaryota</taxon>
        <taxon>Metazoa</taxon>
        <taxon>Ecdysozoa</taxon>
        <taxon>Arthropoda</taxon>
        <taxon>Chelicerata</taxon>
        <taxon>Arachnida</taxon>
        <taxon>Araneae</taxon>
        <taxon>Araneomorphae</taxon>
        <taxon>Entelegynae</taxon>
        <taxon>Agelenidae</taxon>
        <taxon>Agelena</taxon>
    </lineage>
</organism>
<accession>Q5Y4V9</accession>
<protein>
    <recommendedName>
        <fullName>U7-agatoxin-Ao1a</fullName>
        <shortName>U7-AGTX-Ao1a</shortName>
    </recommendedName>
    <alternativeName>
        <fullName>AgorTX_A5</fullName>
    </alternativeName>
</protein>
<keyword id="KW-0027">Amidation</keyword>
<keyword id="KW-1015">Disulfide bond</keyword>
<keyword id="KW-0964">Secreted</keyword>
<keyword id="KW-0732">Signal</keyword>
<keyword id="KW-0800">Toxin</keyword>
<dbReference type="EMBL" id="AY681325">
    <property type="protein sequence ID" value="AAU93681.1"/>
    <property type="molecule type" value="mRNA"/>
</dbReference>
<dbReference type="SMR" id="Q5Y4V9"/>
<dbReference type="ArachnoServer" id="AS000087">
    <property type="toxin name" value="U7-agatoxin-Ao1a"/>
</dbReference>
<dbReference type="GO" id="GO:0005576">
    <property type="term" value="C:extracellular region"/>
    <property type="evidence" value="ECO:0007669"/>
    <property type="project" value="UniProtKB-SubCell"/>
</dbReference>
<dbReference type="GO" id="GO:0090729">
    <property type="term" value="F:toxin activity"/>
    <property type="evidence" value="ECO:0007669"/>
    <property type="project" value="UniProtKB-KW"/>
</dbReference>
<reference key="1">
    <citation type="journal article" date="2005" name="Proteins">
        <title>A novel strategy for the identification of toxinlike structures in spider venom.</title>
        <authorList>
            <person name="Kozlov S.A."/>
            <person name="Malyavka A."/>
            <person name="McCutchen B."/>
            <person name="Lu A."/>
            <person name="Schepers E."/>
            <person name="Herrmann R."/>
            <person name="Grishin E.V."/>
        </authorList>
    </citation>
    <scope>NUCLEOTIDE SEQUENCE [MRNA]</scope>
    <source>
        <tissue>Venom gland</tissue>
    </source>
</reference>
<feature type="signal peptide" evidence="2">
    <location>
        <begin position="1"/>
        <end position="19"/>
    </location>
</feature>
<feature type="propeptide" id="PRO_5000093653" evidence="2">
    <location>
        <begin position="20"/>
        <end position="39"/>
    </location>
</feature>
<feature type="chain" id="PRO_5000093654" description="U7-agatoxin-Ao1a">
    <location>
        <begin position="40"/>
        <end position="101"/>
    </location>
</feature>
<feature type="modified residue" description="Tryptophan amide" evidence="2">
    <location>
        <position position="101"/>
    </location>
</feature>
<sequence>MTQAFFFLLLVSLVASTLSKEFNFCPRAIDEVCPVKEKRNECCSSKECRFGEMCCSEPCGNVCRVKSDTPLGFPAKEDSNCKVGEIKKKWYQKVWSKITKWG</sequence>